<proteinExistence type="inferred from homology"/>
<protein>
    <recommendedName>
        <fullName evidence="1">Shikimate dehydrogenase (NADP(+))</fullName>
        <shortName evidence="1">SDH</shortName>
        <ecNumber evidence="1">1.1.1.25</ecNumber>
    </recommendedName>
</protein>
<sequence>MKQLYGVIGNPIGHSLSPLMHNDAFEHLGIDAHYHAFLVEEEMLGEAVKGLKALGVSGINVTTPHKVAIMKYLDEIDPLAKQIGAVNTVVHRNGKLVGYNTDGIGYVRSLQAISKEPLRHKRMLLLGAGGACRAIYCSLVAAGVKEIDIANRTVETAKQLIASSKERVVSKALSLEKATEAQENYDVLIQTTTIGMHPHVQHTPMQIGSLKQGAIVSDIIYNPFETKFLHDAKLSGAIVQNGIDMFVYQGALAFEMWTGMMPDINRMKQLVIRKLGG</sequence>
<feature type="chain" id="PRO_1000078112" description="Shikimate dehydrogenase (NADP(+))">
    <location>
        <begin position="1"/>
        <end position="277"/>
    </location>
</feature>
<feature type="active site" description="Proton acceptor" evidence="1">
    <location>
        <position position="66"/>
    </location>
</feature>
<feature type="binding site" evidence="1">
    <location>
        <begin position="15"/>
        <end position="17"/>
    </location>
    <ligand>
        <name>shikimate</name>
        <dbReference type="ChEBI" id="CHEBI:36208"/>
    </ligand>
</feature>
<feature type="binding site" evidence="1">
    <location>
        <position position="62"/>
    </location>
    <ligand>
        <name>shikimate</name>
        <dbReference type="ChEBI" id="CHEBI:36208"/>
    </ligand>
</feature>
<feature type="binding site" evidence="1">
    <location>
        <position position="87"/>
    </location>
    <ligand>
        <name>shikimate</name>
        <dbReference type="ChEBI" id="CHEBI:36208"/>
    </ligand>
</feature>
<feature type="binding site" evidence="1">
    <location>
        <position position="102"/>
    </location>
    <ligand>
        <name>shikimate</name>
        <dbReference type="ChEBI" id="CHEBI:36208"/>
    </ligand>
</feature>
<feature type="binding site" evidence="1">
    <location>
        <begin position="127"/>
        <end position="131"/>
    </location>
    <ligand>
        <name>NADP(+)</name>
        <dbReference type="ChEBI" id="CHEBI:58349"/>
    </ligand>
</feature>
<feature type="binding site" evidence="1">
    <location>
        <position position="219"/>
    </location>
    <ligand>
        <name>NADP(+)</name>
        <dbReference type="ChEBI" id="CHEBI:58349"/>
    </ligand>
</feature>
<feature type="binding site" evidence="1">
    <location>
        <position position="221"/>
    </location>
    <ligand>
        <name>shikimate</name>
        <dbReference type="ChEBI" id="CHEBI:36208"/>
    </ligand>
</feature>
<feature type="binding site" evidence="1">
    <location>
        <position position="242"/>
    </location>
    <ligand>
        <name>NADP(+)</name>
        <dbReference type="ChEBI" id="CHEBI:58349"/>
    </ligand>
</feature>
<keyword id="KW-0028">Amino-acid biosynthesis</keyword>
<keyword id="KW-0057">Aromatic amino acid biosynthesis</keyword>
<keyword id="KW-0521">NADP</keyword>
<keyword id="KW-0560">Oxidoreductase</keyword>
<name>AROE_BACCN</name>
<dbReference type="EC" id="1.1.1.25" evidence="1"/>
<dbReference type="EMBL" id="CP000764">
    <property type="protein sequence ID" value="ABS23286.1"/>
    <property type="molecule type" value="Genomic_DNA"/>
</dbReference>
<dbReference type="RefSeq" id="WP_012095524.1">
    <property type="nucleotide sequence ID" value="NC_009674.1"/>
</dbReference>
<dbReference type="SMR" id="A7GT28"/>
<dbReference type="STRING" id="315749.Bcer98_3060"/>
<dbReference type="GeneID" id="33898306"/>
<dbReference type="KEGG" id="bcy:Bcer98_3060"/>
<dbReference type="eggNOG" id="COG0169">
    <property type="taxonomic scope" value="Bacteria"/>
</dbReference>
<dbReference type="HOGENOM" id="CLU_044063_4_1_9"/>
<dbReference type="OrthoDB" id="9792692at2"/>
<dbReference type="UniPathway" id="UPA00053">
    <property type="reaction ID" value="UER00087"/>
</dbReference>
<dbReference type="Proteomes" id="UP000002300">
    <property type="component" value="Chromosome"/>
</dbReference>
<dbReference type="GO" id="GO:0005829">
    <property type="term" value="C:cytosol"/>
    <property type="evidence" value="ECO:0007669"/>
    <property type="project" value="TreeGrafter"/>
</dbReference>
<dbReference type="GO" id="GO:0050661">
    <property type="term" value="F:NADP binding"/>
    <property type="evidence" value="ECO:0007669"/>
    <property type="project" value="InterPro"/>
</dbReference>
<dbReference type="GO" id="GO:0004764">
    <property type="term" value="F:shikimate 3-dehydrogenase (NADP+) activity"/>
    <property type="evidence" value="ECO:0007669"/>
    <property type="project" value="UniProtKB-UniRule"/>
</dbReference>
<dbReference type="GO" id="GO:0008652">
    <property type="term" value="P:amino acid biosynthetic process"/>
    <property type="evidence" value="ECO:0007669"/>
    <property type="project" value="UniProtKB-KW"/>
</dbReference>
<dbReference type="GO" id="GO:0009073">
    <property type="term" value="P:aromatic amino acid family biosynthetic process"/>
    <property type="evidence" value="ECO:0007669"/>
    <property type="project" value="UniProtKB-KW"/>
</dbReference>
<dbReference type="GO" id="GO:0009423">
    <property type="term" value="P:chorismate biosynthetic process"/>
    <property type="evidence" value="ECO:0007669"/>
    <property type="project" value="UniProtKB-UniRule"/>
</dbReference>
<dbReference type="GO" id="GO:0019632">
    <property type="term" value="P:shikimate metabolic process"/>
    <property type="evidence" value="ECO:0007669"/>
    <property type="project" value="InterPro"/>
</dbReference>
<dbReference type="CDD" id="cd01065">
    <property type="entry name" value="NAD_bind_Shikimate_DH"/>
    <property type="match status" value="1"/>
</dbReference>
<dbReference type="FunFam" id="3.40.50.10860:FF:000011">
    <property type="entry name" value="Shikimate dehydrogenase (NADP(+))"/>
    <property type="match status" value="1"/>
</dbReference>
<dbReference type="Gene3D" id="3.40.50.10860">
    <property type="entry name" value="Leucine Dehydrogenase, chain A, domain 1"/>
    <property type="match status" value="1"/>
</dbReference>
<dbReference type="Gene3D" id="3.40.50.720">
    <property type="entry name" value="NAD(P)-binding Rossmann-like Domain"/>
    <property type="match status" value="1"/>
</dbReference>
<dbReference type="HAMAP" id="MF_00222">
    <property type="entry name" value="Shikimate_DH_AroE"/>
    <property type="match status" value="1"/>
</dbReference>
<dbReference type="InterPro" id="IPR046346">
    <property type="entry name" value="Aminoacid_DH-like_N_sf"/>
</dbReference>
<dbReference type="InterPro" id="IPR036291">
    <property type="entry name" value="NAD(P)-bd_dom_sf"/>
</dbReference>
<dbReference type="InterPro" id="IPR041121">
    <property type="entry name" value="SDH_C"/>
</dbReference>
<dbReference type="InterPro" id="IPR011342">
    <property type="entry name" value="Shikimate_DH"/>
</dbReference>
<dbReference type="InterPro" id="IPR013708">
    <property type="entry name" value="Shikimate_DH-bd_N"/>
</dbReference>
<dbReference type="InterPro" id="IPR022893">
    <property type="entry name" value="Shikimate_DH_fam"/>
</dbReference>
<dbReference type="InterPro" id="IPR006151">
    <property type="entry name" value="Shikm_DH/Glu-tRNA_Rdtase"/>
</dbReference>
<dbReference type="NCBIfam" id="TIGR00507">
    <property type="entry name" value="aroE"/>
    <property type="match status" value="1"/>
</dbReference>
<dbReference type="NCBIfam" id="NF001319">
    <property type="entry name" value="PRK00258.3-3"/>
    <property type="match status" value="1"/>
</dbReference>
<dbReference type="PANTHER" id="PTHR21089:SF1">
    <property type="entry name" value="BIFUNCTIONAL 3-DEHYDROQUINATE DEHYDRATASE_SHIKIMATE DEHYDROGENASE, CHLOROPLASTIC"/>
    <property type="match status" value="1"/>
</dbReference>
<dbReference type="PANTHER" id="PTHR21089">
    <property type="entry name" value="SHIKIMATE DEHYDROGENASE"/>
    <property type="match status" value="1"/>
</dbReference>
<dbReference type="Pfam" id="PF18317">
    <property type="entry name" value="SDH_C"/>
    <property type="match status" value="1"/>
</dbReference>
<dbReference type="Pfam" id="PF01488">
    <property type="entry name" value="Shikimate_DH"/>
    <property type="match status" value="1"/>
</dbReference>
<dbReference type="Pfam" id="PF08501">
    <property type="entry name" value="Shikimate_dh_N"/>
    <property type="match status" value="1"/>
</dbReference>
<dbReference type="SUPFAM" id="SSF53223">
    <property type="entry name" value="Aminoacid dehydrogenase-like, N-terminal domain"/>
    <property type="match status" value="1"/>
</dbReference>
<dbReference type="SUPFAM" id="SSF51735">
    <property type="entry name" value="NAD(P)-binding Rossmann-fold domains"/>
    <property type="match status" value="1"/>
</dbReference>
<gene>
    <name evidence="1" type="primary">aroE</name>
    <name type="ordered locus">Bcer98_3060</name>
</gene>
<organism>
    <name type="scientific">Bacillus cytotoxicus (strain DSM 22905 / CIP 110041 / 391-98 / NVH 391-98)</name>
    <dbReference type="NCBI Taxonomy" id="315749"/>
    <lineage>
        <taxon>Bacteria</taxon>
        <taxon>Bacillati</taxon>
        <taxon>Bacillota</taxon>
        <taxon>Bacilli</taxon>
        <taxon>Bacillales</taxon>
        <taxon>Bacillaceae</taxon>
        <taxon>Bacillus</taxon>
        <taxon>Bacillus cereus group</taxon>
    </lineage>
</organism>
<comment type="function">
    <text evidence="1">Involved in the biosynthesis of the chorismate, which leads to the biosynthesis of aromatic amino acids. Catalyzes the reversible NADPH linked reduction of 3-dehydroshikimate (DHSA) to yield shikimate (SA).</text>
</comment>
<comment type="catalytic activity">
    <reaction evidence="1">
        <text>shikimate + NADP(+) = 3-dehydroshikimate + NADPH + H(+)</text>
        <dbReference type="Rhea" id="RHEA:17737"/>
        <dbReference type="ChEBI" id="CHEBI:15378"/>
        <dbReference type="ChEBI" id="CHEBI:16630"/>
        <dbReference type="ChEBI" id="CHEBI:36208"/>
        <dbReference type="ChEBI" id="CHEBI:57783"/>
        <dbReference type="ChEBI" id="CHEBI:58349"/>
        <dbReference type="EC" id="1.1.1.25"/>
    </reaction>
</comment>
<comment type="pathway">
    <text evidence="1">Metabolic intermediate biosynthesis; chorismate biosynthesis; chorismate from D-erythrose 4-phosphate and phosphoenolpyruvate: step 4/7.</text>
</comment>
<comment type="subunit">
    <text evidence="1">Homodimer.</text>
</comment>
<comment type="similarity">
    <text evidence="1">Belongs to the shikimate dehydrogenase family.</text>
</comment>
<accession>A7GT28</accession>
<evidence type="ECO:0000255" key="1">
    <source>
        <dbReference type="HAMAP-Rule" id="MF_00222"/>
    </source>
</evidence>
<reference key="1">
    <citation type="journal article" date="2008" name="Chem. Biol. Interact.">
        <title>Extending the Bacillus cereus group genomics to putative food-borne pathogens of different toxicity.</title>
        <authorList>
            <person name="Lapidus A."/>
            <person name="Goltsman E."/>
            <person name="Auger S."/>
            <person name="Galleron N."/>
            <person name="Segurens B."/>
            <person name="Dossat C."/>
            <person name="Land M.L."/>
            <person name="Broussolle V."/>
            <person name="Brillard J."/>
            <person name="Guinebretiere M.-H."/>
            <person name="Sanchis V."/>
            <person name="Nguen-the C."/>
            <person name="Lereclus D."/>
            <person name="Richardson P."/>
            <person name="Wincker P."/>
            <person name="Weissenbach J."/>
            <person name="Ehrlich S.D."/>
            <person name="Sorokin A."/>
        </authorList>
    </citation>
    <scope>NUCLEOTIDE SEQUENCE [LARGE SCALE GENOMIC DNA]</scope>
    <source>
        <strain>DSM 22905 / CIP 110041 / 391-98 / NVH 391-98</strain>
    </source>
</reference>